<comment type="function">
    <text evidence="1">Component of the eukaryotic translation initiation factor 3 (eIF-3) complex, which is involved in protein synthesis of a specialized repertoire of mRNAs and, together with other initiation factors, stimulates binding of mRNA and methionyl-tRNAi to the 40S ribosome. The eIF-3 complex specifically targets and initiates translation of a subset of mRNAs involved in cell proliferation.</text>
</comment>
<comment type="subunit">
    <text evidence="1">Component of the eukaryotic translation initiation factor 3 (eIF-3) complex.</text>
</comment>
<comment type="subcellular location">
    <subcellularLocation>
        <location evidence="1">Cytoplasm</location>
    </subcellularLocation>
</comment>
<comment type="similarity">
    <text evidence="1">Belongs to the eIF-3 subunit C family.</text>
</comment>
<sequence>MSRFFSRGYHYDTASSSEDEELLTSSEEELMSSSEEEVVSDDSFFNDSESESAESDDDSDGKPYGPDWFKKPQFRKGGAPGGSGASRFLKGNADSSDESDDEGKKVVKSARDKLLDELNNTYNKIDAAEMTQDWTTILSEFESATKLLVKAQQQNMGTPNVFVRVVAQVEDLVAETSQAEIKNKIVAKAYNTVKQRVRKIARENEELLAKFRQHPEAFEKDSTVEFGQARDFDASDLTLMGRKVADRSAIVSSPSDFFSALRIVIDSRGKKGTDIQAQIKTMEELVSISKSPYESIIAYLNLIPIRFDACANLAYQPLEQWKASHNNVTSLLELLEANIESYHVTELAPRNEFIEEEPQPNENGVRMILGSVFTFVERLDDEFNKSLLNTDPHSSDYLDRLRDEQSVYNLILRSQLYLEKVLPEDTASKHLCRSFVRRLDHIYYKTSKLVDIVERAAWASVPANSSSKYITYSDDPDYNFKLVNTLCTVVSSEQEMLKRRATLYQIYYYALNNQFSKAKEMLVQSNVRNSINSQDPTIQILFNRVVVQLGLAAFKLCLVEDCHQILNEVSTASHLRDIMGQQSLQRVSNNISSNGTVTPTEMLCLPFHQHINLDLIDAVFMTCSLLIEIPHMAAFYSGIKVKRIPYSQKSIRRALEHYEKSSFQGPPETLRDHVIHAAKAMQRGNWAQCINYLRSISTWTLLGDKMEKVLEQLAERIQIESLKTYIFTYKRFYTKLSVQKLSELFSLPTEQVISVIQTLENTINIKGSLNEAKEMLIFDKGDEITKLEEVAIKLTKETKYQSERLNNVSQRQ</sequence>
<evidence type="ECO:0000255" key="1">
    <source>
        <dbReference type="HAMAP-Rule" id="MF_03002"/>
    </source>
</evidence>
<evidence type="ECO:0000255" key="2">
    <source>
        <dbReference type="PROSITE-ProRule" id="PRU01185"/>
    </source>
</evidence>
<evidence type="ECO:0000256" key="3">
    <source>
        <dbReference type="SAM" id="MobiDB-lite"/>
    </source>
</evidence>
<keyword id="KW-0963">Cytoplasm</keyword>
<keyword id="KW-0396">Initiation factor</keyword>
<keyword id="KW-0648">Protein biosynthesis</keyword>
<keyword id="KW-1185">Reference proteome</keyword>
<proteinExistence type="inferred from homology"/>
<dbReference type="EMBL" id="AE016820">
    <property type="protein sequence ID" value="AAS54147.1"/>
    <property type="molecule type" value="Genomic_DNA"/>
</dbReference>
<dbReference type="RefSeq" id="NP_986323.1">
    <property type="nucleotide sequence ID" value="NM_211385.1"/>
</dbReference>
<dbReference type="SMR" id="Q751S5"/>
<dbReference type="FunCoup" id="Q751S5">
    <property type="interactions" value="1266"/>
</dbReference>
<dbReference type="STRING" id="284811.Q751S5"/>
<dbReference type="EnsemblFungi" id="AAS54147">
    <property type="protein sequence ID" value="AAS54147"/>
    <property type="gene ID" value="AGOS_AGL344C"/>
</dbReference>
<dbReference type="GeneID" id="4622616"/>
<dbReference type="KEGG" id="ago:AGOS_AGL344C"/>
<dbReference type="eggNOG" id="KOG1076">
    <property type="taxonomic scope" value="Eukaryota"/>
</dbReference>
<dbReference type="HOGENOM" id="CLU_004304_0_2_1"/>
<dbReference type="InParanoid" id="Q751S5"/>
<dbReference type="OMA" id="FRCGLIK"/>
<dbReference type="OrthoDB" id="29647at2759"/>
<dbReference type="Proteomes" id="UP000000591">
    <property type="component" value="Chromosome VII"/>
</dbReference>
<dbReference type="GO" id="GO:0010494">
    <property type="term" value="C:cytoplasmic stress granule"/>
    <property type="evidence" value="ECO:0007669"/>
    <property type="project" value="EnsemblFungi"/>
</dbReference>
<dbReference type="GO" id="GO:0016282">
    <property type="term" value="C:eukaryotic 43S preinitiation complex"/>
    <property type="evidence" value="ECO:0007669"/>
    <property type="project" value="UniProtKB-UniRule"/>
</dbReference>
<dbReference type="GO" id="GO:0033290">
    <property type="term" value="C:eukaryotic 48S preinitiation complex"/>
    <property type="evidence" value="ECO:0007669"/>
    <property type="project" value="UniProtKB-UniRule"/>
</dbReference>
<dbReference type="GO" id="GO:0005852">
    <property type="term" value="C:eukaryotic translation initiation factor 3 complex"/>
    <property type="evidence" value="ECO:0000318"/>
    <property type="project" value="GO_Central"/>
</dbReference>
<dbReference type="GO" id="GO:0071540">
    <property type="term" value="C:eukaryotic translation initiation factor 3 complex, eIF3e"/>
    <property type="evidence" value="ECO:0007669"/>
    <property type="project" value="EnsemblFungi"/>
</dbReference>
<dbReference type="GO" id="GO:0071541">
    <property type="term" value="C:eukaryotic translation initiation factor 3 complex, eIF3m"/>
    <property type="evidence" value="ECO:0007669"/>
    <property type="project" value="EnsemblFungi"/>
</dbReference>
<dbReference type="GO" id="GO:0043614">
    <property type="term" value="C:multi-eIF complex"/>
    <property type="evidence" value="ECO:0007669"/>
    <property type="project" value="EnsemblFungi"/>
</dbReference>
<dbReference type="GO" id="GO:0003723">
    <property type="term" value="F:RNA binding"/>
    <property type="evidence" value="ECO:0007669"/>
    <property type="project" value="InterPro"/>
</dbReference>
<dbReference type="GO" id="GO:0003743">
    <property type="term" value="F:translation initiation factor activity"/>
    <property type="evidence" value="ECO:0007669"/>
    <property type="project" value="UniProtKB-UniRule"/>
</dbReference>
<dbReference type="GO" id="GO:0031369">
    <property type="term" value="F:translation initiation factor binding"/>
    <property type="evidence" value="ECO:0000318"/>
    <property type="project" value="GO_Central"/>
</dbReference>
<dbReference type="GO" id="GO:0001732">
    <property type="term" value="P:formation of cytoplasmic translation initiation complex"/>
    <property type="evidence" value="ECO:0007669"/>
    <property type="project" value="UniProtKB-UniRule"/>
</dbReference>
<dbReference type="GO" id="GO:0006413">
    <property type="term" value="P:translational initiation"/>
    <property type="evidence" value="ECO:0000318"/>
    <property type="project" value="GO_Central"/>
</dbReference>
<dbReference type="HAMAP" id="MF_03002">
    <property type="entry name" value="eIF3c"/>
    <property type="match status" value="1"/>
</dbReference>
<dbReference type="InterPro" id="IPR027516">
    <property type="entry name" value="EIF3C"/>
</dbReference>
<dbReference type="InterPro" id="IPR008905">
    <property type="entry name" value="EIF3C_N_dom"/>
</dbReference>
<dbReference type="InterPro" id="IPR000717">
    <property type="entry name" value="PCI_dom"/>
</dbReference>
<dbReference type="PANTHER" id="PTHR13937">
    <property type="entry name" value="EUKARYOTIC TRANSLATION INITATION FACTOR 3, SUBUNIT 8 EIF3S8 -RELATED"/>
    <property type="match status" value="1"/>
</dbReference>
<dbReference type="PANTHER" id="PTHR13937:SF0">
    <property type="entry name" value="EUKARYOTIC TRANSLATION INITIATION FACTOR 3 SUBUNIT C-RELATED"/>
    <property type="match status" value="1"/>
</dbReference>
<dbReference type="Pfam" id="PF05470">
    <property type="entry name" value="eIF-3c_N"/>
    <property type="match status" value="2"/>
</dbReference>
<dbReference type="Pfam" id="PF01399">
    <property type="entry name" value="PCI"/>
    <property type="match status" value="1"/>
</dbReference>
<dbReference type="SMART" id="SM00088">
    <property type="entry name" value="PINT"/>
    <property type="match status" value="1"/>
</dbReference>
<dbReference type="PROSITE" id="PS50250">
    <property type="entry name" value="PCI"/>
    <property type="match status" value="1"/>
</dbReference>
<name>EIF3C_EREGS</name>
<accession>Q751S5</accession>
<gene>
    <name evidence="1" type="primary">NIP1</name>
    <name type="ordered locus">AGL344C</name>
</gene>
<reference key="1">
    <citation type="journal article" date="2004" name="Science">
        <title>The Ashbya gossypii genome as a tool for mapping the ancient Saccharomyces cerevisiae genome.</title>
        <authorList>
            <person name="Dietrich F.S."/>
            <person name="Voegeli S."/>
            <person name="Brachat S."/>
            <person name="Lerch A."/>
            <person name="Gates K."/>
            <person name="Steiner S."/>
            <person name="Mohr C."/>
            <person name="Poehlmann R."/>
            <person name="Luedi P."/>
            <person name="Choi S."/>
            <person name="Wing R.A."/>
            <person name="Flavier A."/>
            <person name="Gaffney T.D."/>
            <person name="Philippsen P."/>
        </authorList>
    </citation>
    <scope>NUCLEOTIDE SEQUENCE [LARGE SCALE GENOMIC DNA]</scope>
    <source>
        <strain>ATCC 10895 / CBS 109.51 / FGSC 9923 / NRRL Y-1056</strain>
    </source>
</reference>
<reference key="2">
    <citation type="journal article" date="2013" name="G3 (Bethesda)">
        <title>Genomes of Ashbya fungi isolated from insects reveal four mating-type loci, numerous translocations, lack of transposons, and distinct gene duplications.</title>
        <authorList>
            <person name="Dietrich F.S."/>
            <person name="Voegeli S."/>
            <person name="Kuo S."/>
            <person name="Philippsen P."/>
        </authorList>
    </citation>
    <scope>GENOME REANNOTATION</scope>
    <source>
        <strain>ATCC 10895 / CBS 109.51 / FGSC 9923 / NRRL Y-1056</strain>
    </source>
</reference>
<feature type="chain" id="PRO_0000364272" description="Eukaryotic translation initiation factor 3 subunit C">
    <location>
        <begin position="1"/>
        <end position="812"/>
    </location>
</feature>
<feature type="domain" description="PCI" evidence="2">
    <location>
        <begin position="607"/>
        <end position="783"/>
    </location>
</feature>
<feature type="region of interest" description="Disordered" evidence="3">
    <location>
        <begin position="1"/>
        <end position="105"/>
    </location>
</feature>
<feature type="compositionally biased region" description="Acidic residues" evidence="3">
    <location>
        <begin position="17"/>
        <end position="40"/>
    </location>
</feature>
<feature type="compositionally biased region" description="Acidic residues" evidence="3">
    <location>
        <begin position="48"/>
        <end position="59"/>
    </location>
</feature>
<protein>
    <recommendedName>
        <fullName evidence="1">Eukaryotic translation initiation factor 3 subunit C</fullName>
        <shortName evidence="1">eIF3c</shortName>
    </recommendedName>
    <alternativeName>
        <fullName evidence="1">Eukaryotic translation initiation factor 3 93 kDa subunit homolog</fullName>
        <shortName evidence="1">eIF3 p93</shortName>
    </alternativeName>
    <alternativeName>
        <fullName evidence="1">Translation initiation factor eIF3, p93 subunit homolog</fullName>
    </alternativeName>
</protein>
<organism>
    <name type="scientific">Eremothecium gossypii (strain ATCC 10895 / CBS 109.51 / FGSC 9923 / NRRL Y-1056)</name>
    <name type="common">Yeast</name>
    <name type="synonym">Ashbya gossypii</name>
    <dbReference type="NCBI Taxonomy" id="284811"/>
    <lineage>
        <taxon>Eukaryota</taxon>
        <taxon>Fungi</taxon>
        <taxon>Dikarya</taxon>
        <taxon>Ascomycota</taxon>
        <taxon>Saccharomycotina</taxon>
        <taxon>Saccharomycetes</taxon>
        <taxon>Saccharomycetales</taxon>
        <taxon>Saccharomycetaceae</taxon>
        <taxon>Eremothecium</taxon>
    </lineage>
</organism>